<keyword id="KW-0028">Amino-acid biosynthesis</keyword>
<keyword id="KW-0963">Cytoplasm</keyword>
<keyword id="KW-0220">Diaminopimelate biosynthesis</keyword>
<keyword id="KW-0457">Lysine biosynthesis</keyword>
<keyword id="KW-0520">NAD</keyword>
<keyword id="KW-0521">NADP</keyword>
<keyword id="KW-0560">Oxidoreductase</keyword>
<keyword id="KW-1185">Reference proteome</keyword>
<dbReference type="EC" id="1.17.1.8" evidence="1"/>
<dbReference type="EMBL" id="AE000666">
    <property type="protein sequence ID" value="AAB85300.1"/>
    <property type="molecule type" value="Genomic_DNA"/>
</dbReference>
<dbReference type="PIR" id="H69206">
    <property type="entry name" value="H69206"/>
</dbReference>
<dbReference type="RefSeq" id="WP_010876435.1">
    <property type="nucleotide sequence ID" value="NC_000916.1"/>
</dbReference>
<dbReference type="SMR" id="O26891"/>
<dbReference type="FunCoup" id="O26891">
    <property type="interactions" value="86"/>
</dbReference>
<dbReference type="STRING" id="187420.MTH_800"/>
<dbReference type="PaxDb" id="187420-MTH_800"/>
<dbReference type="EnsemblBacteria" id="AAB85300">
    <property type="protein sequence ID" value="AAB85300"/>
    <property type="gene ID" value="MTH_800"/>
</dbReference>
<dbReference type="GeneID" id="82297252"/>
<dbReference type="KEGG" id="mth:MTH_800"/>
<dbReference type="PATRIC" id="fig|187420.15.peg.785"/>
<dbReference type="HOGENOM" id="CLU_047479_2_1_2"/>
<dbReference type="InParanoid" id="O26891"/>
<dbReference type="UniPathway" id="UPA00034">
    <property type="reaction ID" value="UER00018"/>
</dbReference>
<dbReference type="Proteomes" id="UP000005223">
    <property type="component" value="Chromosome"/>
</dbReference>
<dbReference type="GO" id="GO:0005737">
    <property type="term" value="C:cytoplasm"/>
    <property type="evidence" value="ECO:0007669"/>
    <property type="project" value="UniProtKB-SubCell"/>
</dbReference>
<dbReference type="GO" id="GO:0008839">
    <property type="term" value="F:4-hydroxy-tetrahydrodipicolinate reductase"/>
    <property type="evidence" value="ECO:0007669"/>
    <property type="project" value="UniProtKB-EC"/>
</dbReference>
<dbReference type="GO" id="GO:0051287">
    <property type="term" value="F:NAD binding"/>
    <property type="evidence" value="ECO:0007669"/>
    <property type="project" value="UniProtKB-UniRule"/>
</dbReference>
<dbReference type="GO" id="GO:0050661">
    <property type="term" value="F:NADP binding"/>
    <property type="evidence" value="ECO:0007669"/>
    <property type="project" value="UniProtKB-UniRule"/>
</dbReference>
<dbReference type="GO" id="GO:0016726">
    <property type="term" value="F:oxidoreductase activity, acting on CH or CH2 groups, NAD or NADP as acceptor"/>
    <property type="evidence" value="ECO:0007669"/>
    <property type="project" value="UniProtKB-UniRule"/>
</dbReference>
<dbReference type="GO" id="GO:0019877">
    <property type="term" value="P:diaminopimelate biosynthetic process"/>
    <property type="evidence" value="ECO:0007669"/>
    <property type="project" value="UniProtKB-UniRule"/>
</dbReference>
<dbReference type="GO" id="GO:0009089">
    <property type="term" value="P:lysine biosynthetic process via diaminopimelate"/>
    <property type="evidence" value="ECO:0007669"/>
    <property type="project" value="UniProtKB-UniRule"/>
</dbReference>
<dbReference type="CDD" id="cd02274">
    <property type="entry name" value="DHDPR_N"/>
    <property type="match status" value="1"/>
</dbReference>
<dbReference type="FunFam" id="3.30.360.10:FF:000004">
    <property type="entry name" value="4-hydroxy-tetrahydrodipicolinate reductase"/>
    <property type="match status" value="1"/>
</dbReference>
<dbReference type="Gene3D" id="3.30.360.10">
    <property type="entry name" value="Dihydrodipicolinate Reductase, domain 2"/>
    <property type="match status" value="1"/>
</dbReference>
<dbReference type="Gene3D" id="3.40.50.720">
    <property type="entry name" value="NAD(P)-binding Rossmann-like Domain"/>
    <property type="match status" value="1"/>
</dbReference>
<dbReference type="HAMAP" id="MF_00102">
    <property type="entry name" value="DapB"/>
    <property type="match status" value="1"/>
</dbReference>
<dbReference type="InterPro" id="IPR022663">
    <property type="entry name" value="DapB_C"/>
</dbReference>
<dbReference type="InterPro" id="IPR000846">
    <property type="entry name" value="DapB_N"/>
</dbReference>
<dbReference type="InterPro" id="IPR022664">
    <property type="entry name" value="DapB_N_CS"/>
</dbReference>
<dbReference type="InterPro" id="IPR023940">
    <property type="entry name" value="DHDPR_bac"/>
</dbReference>
<dbReference type="InterPro" id="IPR036291">
    <property type="entry name" value="NAD(P)-bd_dom_sf"/>
</dbReference>
<dbReference type="NCBIfam" id="TIGR00036">
    <property type="entry name" value="dapB"/>
    <property type="match status" value="1"/>
</dbReference>
<dbReference type="PANTHER" id="PTHR20836:SF0">
    <property type="entry name" value="4-HYDROXY-TETRAHYDRODIPICOLINATE REDUCTASE 1, CHLOROPLASTIC-RELATED"/>
    <property type="match status" value="1"/>
</dbReference>
<dbReference type="PANTHER" id="PTHR20836">
    <property type="entry name" value="DIHYDRODIPICOLINATE REDUCTASE"/>
    <property type="match status" value="1"/>
</dbReference>
<dbReference type="Pfam" id="PF05173">
    <property type="entry name" value="DapB_C"/>
    <property type="match status" value="1"/>
</dbReference>
<dbReference type="Pfam" id="PF01113">
    <property type="entry name" value="DapB_N"/>
    <property type="match status" value="1"/>
</dbReference>
<dbReference type="PIRSF" id="PIRSF000161">
    <property type="entry name" value="DHPR"/>
    <property type="match status" value="1"/>
</dbReference>
<dbReference type="SUPFAM" id="SSF55347">
    <property type="entry name" value="Glyceraldehyde-3-phosphate dehydrogenase-like, C-terminal domain"/>
    <property type="match status" value="1"/>
</dbReference>
<dbReference type="SUPFAM" id="SSF51735">
    <property type="entry name" value="NAD(P)-binding Rossmann-fold domains"/>
    <property type="match status" value="1"/>
</dbReference>
<dbReference type="PROSITE" id="PS01298">
    <property type="entry name" value="DAPB"/>
    <property type="match status" value="1"/>
</dbReference>
<organism>
    <name type="scientific">Methanothermobacter thermautotrophicus (strain ATCC 29096 / DSM 1053 / JCM 10044 / NBRC 100330 / Delta H)</name>
    <name type="common">Methanobacterium thermoautotrophicum</name>
    <dbReference type="NCBI Taxonomy" id="187420"/>
    <lineage>
        <taxon>Archaea</taxon>
        <taxon>Methanobacteriati</taxon>
        <taxon>Methanobacteriota</taxon>
        <taxon>Methanomada group</taxon>
        <taxon>Methanobacteria</taxon>
        <taxon>Methanobacteriales</taxon>
        <taxon>Methanobacteriaceae</taxon>
        <taxon>Methanothermobacter</taxon>
    </lineage>
</organism>
<reference key="1">
    <citation type="journal article" date="1997" name="J. Bacteriol.">
        <title>Complete genome sequence of Methanobacterium thermoautotrophicum deltaH: functional analysis and comparative genomics.</title>
        <authorList>
            <person name="Smith D.R."/>
            <person name="Doucette-Stamm L.A."/>
            <person name="Deloughery C."/>
            <person name="Lee H.-M."/>
            <person name="Dubois J."/>
            <person name="Aldredge T."/>
            <person name="Bashirzadeh R."/>
            <person name="Blakely D."/>
            <person name="Cook R."/>
            <person name="Gilbert K."/>
            <person name="Harrison D."/>
            <person name="Hoang L."/>
            <person name="Keagle P."/>
            <person name="Lumm W."/>
            <person name="Pothier B."/>
            <person name="Qiu D."/>
            <person name="Spadafora R."/>
            <person name="Vicare R."/>
            <person name="Wang Y."/>
            <person name="Wierzbowski J."/>
            <person name="Gibson R."/>
            <person name="Jiwani N."/>
            <person name="Caruso A."/>
            <person name="Bush D."/>
            <person name="Safer H."/>
            <person name="Patwell D."/>
            <person name="Prabhakar S."/>
            <person name="McDougall S."/>
            <person name="Shimer G."/>
            <person name="Goyal A."/>
            <person name="Pietrovski S."/>
            <person name="Church G.M."/>
            <person name="Daniels C.J."/>
            <person name="Mao J.-I."/>
            <person name="Rice P."/>
            <person name="Noelling J."/>
            <person name="Reeve J.N."/>
        </authorList>
    </citation>
    <scope>NUCLEOTIDE SEQUENCE [LARGE SCALE GENOMIC DNA]</scope>
    <source>
        <strain>ATCC 29096 / DSM 1053 / JCM 10044 / NBRC 100330 / Delta H</strain>
    </source>
</reference>
<feature type="chain" id="PRO_0000141521" description="4-hydroxy-tetrahydrodipicolinate reductase">
    <location>
        <begin position="1"/>
        <end position="273"/>
    </location>
</feature>
<feature type="active site" description="Proton donor/acceptor" evidence="1">
    <location>
        <position position="160"/>
    </location>
</feature>
<feature type="active site" description="Proton donor" evidence="1">
    <location>
        <position position="164"/>
    </location>
</feature>
<feature type="binding site" evidence="1">
    <location>
        <begin position="8"/>
        <end position="13"/>
    </location>
    <ligand>
        <name>NAD(+)</name>
        <dbReference type="ChEBI" id="CHEBI:57540"/>
    </ligand>
</feature>
<feature type="binding site" evidence="1">
    <location>
        <position position="34"/>
    </location>
    <ligand>
        <name>NAD(+)</name>
        <dbReference type="ChEBI" id="CHEBI:57540"/>
    </ligand>
</feature>
<feature type="binding site" evidence="1">
    <location>
        <begin position="102"/>
        <end position="104"/>
    </location>
    <ligand>
        <name>NAD(+)</name>
        <dbReference type="ChEBI" id="CHEBI:57540"/>
    </ligand>
</feature>
<feature type="binding site" evidence="1">
    <location>
        <begin position="128"/>
        <end position="131"/>
    </location>
    <ligand>
        <name>NAD(+)</name>
        <dbReference type="ChEBI" id="CHEBI:57540"/>
    </ligand>
</feature>
<feature type="binding site" evidence="1">
    <location>
        <position position="161"/>
    </location>
    <ligand>
        <name>(S)-2,3,4,5-tetrahydrodipicolinate</name>
        <dbReference type="ChEBI" id="CHEBI:16845"/>
    </ligand>
</feature>
<feature type="binding site" evidence="1">
    <location>
        <begin position="170"/>
        <end position="171"/>
    </location>
    <ligand>
        <name>(S)-2,3,4,5-tetrahydrodipicolinate</name>
        <dbReference type="ChEBI" id="CHEBI:16845"/>
    </ligand>
</feature>
<evidence type="ECO:0000255" key="1">
    <source>
        <dbReference type="HAMAP-Rule" id="MF_00102"/>
    </source>
</evidence>
<evidence type="ECO:0000305" key="2"/>
<gene>
    <name evidence="1" type="primary">dapB</name>
    <name type="ordered locus">MTH_800</name>
</gene>
<name>DAPB_METTH</name>
<accession>O26891</accession>
<comment type="function">
    <text evidence="1">Catalyzes the conversion of 4-hydroxy-tetrahydrodipicolinate (HTPA) to tetrahydrodipicolinate.</text>
</comment>
<comment type="catalytic activity">
    <reaction evidence="1">
        <text>(S)-2,3,4,5-tetrahydrodipicolinate + NAD(+) + H2O = (2S,4S)-4-hydroxy-2,3,4,5-tetrahydrodipicolinate + NADH + H(+)</text>
        <dbReference type="Rhea" id="RHEA:35323"/>
        <dbReference type="ChEBI" id="CHEBI:15377"/>
        <dbReference type="ChEBI" id="CHEBI:15378"/>
        <dbReference type="ChEBI" id="CHEBI:16845"/>
        <dbReference type="ChEBI" id="CHEBI:57540"/>
        <dbReference type="ChEBI" id="CHEBI:57945"/>
        <dbReference type="ChEBI" id="CHEBI:67139"/>
        <dbReference type="EC" id="1.17.1.8"/>
    </reaction>
</comment>
<comment type="catalytic activity">
    <reaction evidence="1">
        <text>(S)-2,3,4,5-tetrahydrodipicolinate + NADP(+) + H2O = (2S,4S)-4-hydroxy-2,3,4,5-tetrahydrodipicolinate + NADPH + H(+)</text>
        <dbReference type="Rhea" id="RHEA:35331"/>
        <dbReference type="ChEBI" id="CHEBI:15377"/>
        <dbReference type="ChEBI" id="CHEBI:15378"/>
        <dbReference type="ChEBI" id="CHEBI:16845"/>
        <dbReference type="ChEBI" id="CHEBI:57783"/>
        <dbReference type="ChEBI" id="CHEBI:58349"/>
        <dbReference type="ChEBI" id="CHEBI:67139"/>
        <dbReference type="EC" id="1.17.1.8"/>
    </reaction>
</comment>
<comment type="pathway">
    <text evidence="1">Amino-acid biosynthesis; L-lysine biosynthesis via DAP pathway; (S)-tetrahydrodipicolinate from L-aspartate: step 4/4.</text>
</comment>
<comment type="subcellular location">
    <subcellularLocation>
        <location evidence="1">Cytoplasm</location>
    </subcellularLocation>
</comment>
<comment type="similarity">
    <text evidence="1">Belongs to the DapB family.</text>
</comment>
<comment type="caution">
    <text evidence="2">Was originally thought to be a dihydrodipicolinate reductase (DHDPR), catalyzing the conversion of dihydrodipicolinate to tetrahydrodipicolinate. However, it was shown in E.coli that the substrate of the enzymatic reaction is not dihydrodipicolinate (DHDP) but in fact (2S,4S)-4-hydroxy-2,3,4,5-tetrahydrodipicolinic acid (HTPA), the product released by the DapA-catalyzed reaction.</text>
</comment>
<sequence length="273" mass="29045">MIRVAVTGACGRMGSGIIRRVLEEEDMELVAAIEAPGTPLRGRDIGEFTGRGSVGVEVTDASNLADTLAETEPDVLVDFTVASAAVETIKTSTEAGVNLVVGTTGFSEEEMQTVRDCIERSGVRAVIAPNMAVGVNVFFKVLRDLAPILSDYDVEIIEAHHRHKKDAPSGTAVRALEVISEATGRRASEVAVHGRSGLTGERSRDEIGVHAVRGGDIVGDHIVLFAGDGERLEIVHRAHSRDAFIGGVIRAIRFIEDAEPGRIMDMGDVLGIN</sequence>
<protein>
    <recommendedName>
        <fullName evidence="1">4-hydroxy-tetrahydrodipicolinate reductase</fullName>
        <shortName evidence="1">HTPA reductase</shortName>
        <ecNumber evidence="1">1.17.1.8</ecNumber>
    </recommendedName>
</protein>
<proteinExistence type="inferred from homology"/>